<dbReference type="EC" id="6.3.5.2" evidence="1"/>
<dbReference type="EMBL" id="CP000562">
    <property type="protein sequence ID" value="ABN56669.1"/>
    <property type="molecule type" value="Genomic_DNA"/>
</dbReference>
<dbReference type="RefSeq" id="WP_011843580.1">
    <property type="nucleotide sequence ID" value="NC_009051.1"/>
</dbReference>
<dbReference type="SMR" id="A3CTG9"/>
<dbReference type="STRING" id="368407.Memar_0736"/>
<dbReference type="GeneID" id="4846221"/>
<dbReference type="KEGG" id="mem:Memar_0736"/>
<dbReference type="eggNOG" id="arCOG00087">
    <property type="taxonomic scope" value="Archaea"/>
</dbReference>
<dbReference type="HOGENOM" id="CLU_014340_1_4_2"/>
<dbReference type="OrthoDB" id="10772at2157"/>
<dbReference type="UniPathway" id="UPA00189">
    <property type="reaction ID" value="UER00296"/>
</dbReference>
<dbReference type="Proteomes" id="UP000002146">
    <property type="component" value="Chromosome"/>
</dbReference>
<dbReference type="GO" id="GO:0005829">
    <property type="term" value="C:cytosol"/>
    <property type="evidence" value="ECO:0007669"/>
    <property type="project" value="TreeGrafter"/>
</dbReference>
<dbReference type="GO" id="GO:0005524">
    <property type="term" value="F:ATP binding"/>
    <property type="evidence" value="ECO:0007669"/>
    <property type="project" value="UniProtKB-KW"/>
</dbReference>
<dbReference type="GO" id="GO:0003921">
    <property type="term" value="F:GMP synthase activity"/>
    <property type="evidence" value="ECO:0007669"/>
    <property type="project" value="TreeGrafter"/>
</dbReference>
<dbReference type="CDD" id="cd01742">
    <property type="entry name" value="GATase1_GMP_Synthase"/>
    <property type="match status" value="1"/>
</dbReference>
<dbReference type="FunFam" id="3.40.50.880:FF:000047">
    <property type="entry name" value="GMP synthase [glutamine-hydrolyzing] subunit A"/>
    <property type="match status" value="1"/>
</dbReference>
<dbReference type="Gene3D" id="3.40.50.880">
    <property type="match status" value="1"/>
</dbReference>
<dbReference type="HAMAP" id="MF_01510">
    <property type="entry name" value="GMP_synthase_A"/>
    <property type="match status" value="1"/>
</dbReference>
<dbReference type="InterPro" id="IPR029062">
    <property type="entry name" value="Class_I_gatase-like"/>
</dbReference>
<dbReference type="InterPro" id="IPR017926">
    <property type="entry name" value="GATASE"/>
</dbReference>
<dbReference type="InterPro" id="IPR004739">
    <property type="entry name" value="GMP_synth_GATase"/>
</dbReference>
<dbReference type="InterPro" id="IPR023686">
    <property type="entry name" value="GMP_synthase_A"/>
</dbReference>
<dbReference type="NCBIfam" id="TIGR00888">
    <property type="entry name" value="guaA_Nterm"/>
    <property type="match status" value="1"/>
</dbReference>
<dbReference type="NCBIfam" id="NF001975">
    <property type="entry name" value="PRK00758.1"/>
    <property type="match status" value="1"/>
</dbReference>
<dbReference type="PANTHER" id="PTHR11922:SF2">
    <property type="entry name" value="GMP SYNTHASE [GLUTAMINE-HYDROLYZING]"/>
    <property type="match status" value="1"/>
</dbReference>
<dbReference type="PANTHER" id="PTHR11922">
    <property type="entry name" value="GMP SYNTHASE-RELATED"/>
    <property type="match status" value="1"/>
</dbReference>
<dbReference type="Pfam" id="PF00117">
    <property type="entry name" value="GATase"/>
    <property type="match status" value="1"/>
</dbReference>
<dbReference type="PRINTS" id="PR00097">
    <property type="entry name" value="ANTSNTHASEII"/>
</dbReference>
<dbReference type="PRINTS" id="PR00096">
    <property type="entry name" value="GATASE"/>
</dbReference>
<dbReference type="SUPFAM" id="SSF52317">
    <property type="entry name" value="Class I glutamine amidotransferase-like"/>
    <property type="match status" value="1"/>
</dbReference>
<dbReference type="PROSITE" id="PS51273">
    <property type="entry name" value="GATASE_TYPE_1"/>
    <property type="match status" value="1"/>
</dbReference>
<keyword id="KW-0067">ATP-binding</keyword>
<keyword id="KW-0315">Glutamine amidotransferase</keyword>
<keyword id="KW-0332">GMP biosynthesis</keyword>
<keyword id="KW-0436">Ligase</keyword>
<keyword id="KW-0547">Nucleotide-binding</keyword>
<keyword id="KW-0658">Purine biosynthesis</keyword>
<organism>
    <name type="scientific">Methanoculleus marisnigri (strain ATCC 35101 / DSM 1498 / JR1)</name>
    <dbReference type="NCBI Taxonomy" id="368407"/>
    <lineage>
        <taxon>Archaea</taxon>
        <taxon>Methanobacteriati</taxon>
        <taxon>Methanobacteriota</taxon>
        <taxon>Stenosarchaea group</taxon>
        <taxon>Methanomicrobia</taxon>
        <taxon>Methanomicrobiales</taxon>
        <taxon>Methanomicrobiaceae</taxon>
        <taxon>Methanoculleus</taxon>
    </lineage>
</organism>
<accession>A3CTG9</accession>
<gene>
    <name evidence="1" type="primary">guaAA</name>
    <name type="ordered locus">Memar_0736</name>
</gene>
<feature type="chain" id="PRO_0000294267" description="GMP synthase [glutamine-hydrolyzing] subunit A">
    <location>
        <begin position="1"/>
        <end position="184"/>
    </location>
</feature>
<feature type="domain" description="Glutamine amidotransferase type-1" evidence="1">
    <location>
        <begin position="3"/>
        <end position="184"/>
    </location>
</feature>
<feature type="active site" description="Nucleophile" evidence="1">
    <location>
        <position position="75"/>
    </location>
</feature>
<feature type="active site" evidence="1">
    <location>
        <position position="162"/>
    </location>
</feature>
<feature type="active site" evidence="1">
    <location>
        <position position="164"/>
    </location>
</feature>
<protein>
    <recommendedName>
        <fullName evidence="1">GMP synthase [glutamine-hydrolyzing] subunit A</fullName>
        <ecNumber evidence="1">6.3.5.2</ecNumber>
    </recommendedName>
    <alternativeName>
        <fullName evidence="1">Glutamine amidotransferase</fullName>
    </alternativeName>
</protein>
<proteinExistence type="inferred from homology"/>
<evidence type="ECO:0000255" key="1">
    <source>
        <dbReference type="HAMAP-Rule" id="MF_01510"/>
    </source>
</evidence>
<comment type="function">
    <text evidence="1">Catalyzes the synthesis of GMP from XMP.</text>
</comment>
<comment type="catalytic activity">
    <reaction evidence="1">
        <text>XMP + L-glutamine + ATP + H2O = GMP + L-glutamate + AMP + diphosphate + 2 H(+)</text>
        <dbReference type="Rhea" id="RHEA:11680"/>
        <dbReference type="ChEBI" id="CHEBI:15377"/>
        <dbReference type="ChEBI" id="CHEBI:15378"/>
        <dbReference type="ChEBI" id="CHEBI:29985"/>
        <dbReference type="ChEBI" id="CHEBI:30616"/>
        <dbReference type="ChEBI" id="CHEBI:33019"/>
        <dbReference type="ChEBI" id="CHEBI:57464"/>
        <dbReference type="ChEBI" id="CHEBI:58115"/>
        <dbReference type="ChEBI" id="CHEBI:58359"/>
        <dbReference type="ChEBI" id="CHEBI:456215"/>
        <dbReference type="EC" id="6.3.5.2"/>
    </reaction>
</comment>
<comment type="pathway">
    <text evidence="1">Purine metabolism; GMP biosynthesis; GMP from XMP (L-Gln route): step 1/1.</text>
</comment>
<comment type="subunit">
    <text evidence="1">Heterodimer composed of a glutamine amidotransferase subunit (A) and a GMP-binding subunit (B).</text>
</comment>
<name>GUAAA_METMJ</name>
<reference key="1">
    <citation type="journal article" date="2009" name="Stand. Genomic Sci.">
        <title>Complete genome sequence of Methanoculleus marisnigri Romesser et al. 1981 type strain JR1.</title>
        <authorList>
            <person name="Anderson I.J."/>
            <person name="Sieprawska-Lupa M."/>
            <person name="Lapidus A."/>
            <person name="Nolan M."/>
            <person name="Copeland A."/>
            <person name="Glavina Del Rio T."/>
            <person name="Tice H."/>
            <person name="Dalin E."/>
            <person name="Barry K."/>
            <person name="Saunders E."/>
            <person name="Han C."/>
            <person name="Brettin T."/>
            <person name="Detter J.C."/>
            <person name="Bruce D."/>
            <person name="Mikhailova N."/>
            <person name="Pitluck S."/>
            <person name="Hauser L."/>
            <person name="Land M."/>
            <person name="Lucas S."/>
            <person name="Richardson P."/>
            <person name="Whitman W.B."/>
            <person name="Kyrpides N.C."/>
        </authorList>
    </citation>
    <scope>NUCLEOTIDE SEQUENCE [LARGE SCALE GENOMIC DNA]</scope>
    <source>
        <strain>ATCC 35101 / DSM 1498 / JR1</strain>
    </source>
</reference>
<sequence>MLPLYVVNNHGQFNHLILRTLRDMDIEATMISNETPPAEVARGCRGIVLGGGPTLERAGVASAYLDLGLPVLGICLGLHIMATARGGAIRRGASGGFGAVEVEIFEQNPLLRGYPDRMQVWASHADEVSVVPEGFVRLAGSSICGVEAMASPDEHLYGIQWHPEVSHTVNGRLLFENFDGICSE</sequence>